<organism>
    <name type="scientific">Methylorubrum populi (strain ATCC BAA-705 / NCIMB 13946 / BJ001)</name>
    <name type="common">Methylobacterium populi</name>
    <dbReference type="NCBI Taxonomy" id="441620"/>
    <lineage>
        <taxon>Bacteria</taxon>
        <taxon>Pseudomonadati</taxon>
        <taxon>Pseudomonadota</taxon>
        <taxon>Alphaproteobacteria</taxon>
        <taxon>Hyphomicrobiales</taxon>
        <taxon>Methylobacteriaceae</taxon>
        <taxon>Methylorubrum</taxon>
    </lineage>
</organism>
<proteinExistence type="inferred from homology"/>
<evidence type="ECO:0000255" key="1">
    <source>
        <dbReference type="HAMAP-Rule" id="MF_01554"/>
    </source>
</evidence>
<sequence>MRKHFGTDGIRGRANGIITPELALKVGQAAGVIFQRGDHRHRVVIGKDTRLSGYMIETALVAGFTSVGMDVLLLGPMPTPAVAMLTRSMRADIGVMISASHNPFEDNGIKLFGPDGFKLNDELELEIESLIDGDMRRRLAGSRDLGRAKRIESVHARYIEFAKRTLPRHVTLDGLRVVVDCANGAAYRVAPETLWELGAEVIAIGVEPDGFNINRDVGSTAPESLVQKVRELRADVGIALDGDADRVLIVDEKGQKVDGDQLMAAVARSWKEDERLTQPGLVATIMSNLGLERFINGLGLTLARTAVGDRYVLEHMREHGYNLGGEQSGHIIMSDYATTGDGLVAALQLLSVVKRRNLPVSEVCHCFEPLPQILKNVRFRSGEPLRADSVVTAIAHAKDRLGQSGRLVIRPSGTEPVIRVMAEGDDHALVAEVVDEVVDAVTRAAA</sequence>
<name>GLMM_METPB</name>
<keyword id="KW-0413">Isomerase</keyword>
<keyword id="KW-0460">Magnesium</keyword>
<keyword id="KW-0479">Metal-binding</keyword>
<keyword id="KW-0597">Phosphoprotein</keyword>
<accession>B1ZBR8</accession>
<protein>
    <recommendedName>
        <fullName evidence="1">Phosphoglucosamine mutase</fullName>
        <ecNumber evidence="1">5.4.2.10</ecNumber>
    </recommendedName>
</protein>
<comment type="function">
    <text evidence="1">Catalyzes the conversion of glucosamine-6-phosphate to glucosamine-1-phosphate.</text>
</comment>
<comment type="catalytic activity">
    <reaction evidence="1">
        <text>alpha-D-glucosamine 1-phosphate = D-glucosamine 6-phosphate</text>
        <dbReference type="Rhea" id="RHEA:23424"/>
        <dbReference type="ChEBI" id="CHEBI:58516"/>
        <dbReference type="ChEBI" id="CHEBI:58725"/>
        <dbReference type="EC" id="5.4.2.10"/>
    </reaction>
</comment>
<comment type="cofactor">
    <cofactor evidence="1">
        <name>Mg(2+)</name>
        <dbReference type="ChEBI" id="CHEBI:18420"/>
    </cofactor>
    <text evidence="1">Binds 1 Mg(2+) ion per subunit.</text>
</comment>
<comment type="PTM">
    <text evidence="1">Activated by phosphorylation.</text>
</comment>
<comment type="similarity">
    <text evidence="1">Belongs to the phosphohexose mutase family.</text>
</comment>
<dbReference type="EC" id="5.4.2.10" evidence="1"/>
<dbReference type="EMBL" id="CP001029">
    <property type="protein sequence ID" value="ACB83476.1"/>
    <property type="molecule type" value="Genomic_DNA"/>
</dbReference>
<dbReference type="RefSeq" id="WP_012457072.1">
    <property type="nucleotide sequence ID" value="NC_010725.1"/>
</dbReference>
<dbReference type="SMR" id="B1ZBR8"/>
<dbReference type="STRING" id="441620.Mpop_5384"/>
<dbReference type="KEGG" id="mpo:Mpop_5384"/>
<dbReference type="eggNOG" id="COG1109">
    <property type="taxonomic scope" value="Bacteria"/>
</dbReference>
<dbReference type="HOGENOM" id="CLU_016950_7_0_5"/>
<dbReference type="OrthoDB" id="9803322at2"/>
<dbReference type="Proteomes" id="UP000007136">
    <property type="component" value="Chromosome"/>
</dbReference>
<dbReference type="GO" id="GO:0005829">
    <property type="term" value="C:cytosol"/>
    <property type="evidence" value="ECO:0007669"/>
    <property type="project" value="TreeGrafter"/>
</dbReference>
<dbReference type="GO" id="GO:0000287">
    <property type="term" value="F:magnesium ion binding"/>
    <property type="evidence" value="ECO:0007669"/>
    <property type="project" value="UniProtKB-UniRule"/>
</dbReference>
<dbReference type="GO" id="GO:0008966">
    <property type="term" value="F:phosphoglucosamine mutase activity"/>
    <property type="evidence" value="ECO:0007669"/>
    <property type="project" value="UniProtKB-UniRule"/>
</dbReference>
<dbReference type="GO" id="GO:0004615">
    <property type="term" value="F:phosphomannomutase activity"/>
    <property type="evidence" value="ECO:0007669"/>
    <property type="project" value="TreeGrafter"/>
</dbReference>
<dbReference type="GO" id="GO:0005975">
    <property type="term" value="P:carbohydrate metabolic process"/>
    <property type="evidence" value="ECO:0007669"/>
    <property type="project" value="InterPro"/>
</dbReference>
<dbReference type="GO" id="GO:0009252">
    <property type="term" value="P:peptidoglycan biosynthetic process"/>
    <property type="evidence" value="ECO:0007669"/>
    <property type="project" value="TreeGrafter"/>
</dbReference>
<dbReference type="GO" id="GO:0006048">
    <property type="term" value="P:UDP-N-acetylglucosamine biosynthetic process"/>
    <property type="evidence" value="ECO:0007669"/>
    <property type="project" value="TreeGrafter"/>
</dbReference>
<dbReference type="CDD" id="cd05802">
    <property type="entry name" value="GlmM"/>
    <property type="match status" value="1"/>
</dbReference>
<dbReference type="FunFam" id="3.30.310.50:FF:000001">
    <property type="entry name" value="Phosphoglucosamine mutase"/>
    <property type="match status" value="1"/>
</dbReference>
<dbReference type="FunFam" id="3.40.120.10:FF:000001">
    <property type="entry name" value="Phosphoglucosamine mutase"/>
    <property type="match status" value="1"/>
</dbReference>
<dbReference type="FunFam" id="3.40.120.10:FF:000003">
    <property type="entry name" value="Phosphoglucosamine mutase"/>
    <property type="match status" value="1"/>
</dbReference>
<dbReference type="Gene3D" id="3.40.120.10">
    <property type="entry name" value="Alpha-D-Glucose-1,6-Bisphosphate, subunit A, domain 3"/>
    <property type="match status" value="3"/>
</dbReference>
<dbReference type="Gene3D" id="3.30.310.50">
    <property type="entry name" value="Alpha-D-phosphohexomutase, C-terminal domain"/>
    <property type="match status" value="1"/>
</dbReference>
<dbReference type="HAMAP" id="MF_01554_B">
    <property type="entry name" value="GlmM_B"/>
    <property type="match status" value="1"/>
</dbReference>
<dbReference type="InterPro" id="IPR005844">
    <property type="entry name" value="A-D-PHexomutase_a/b/a-I"/>
</dbReference>
<dbReference type="InterPro" id="IPR016055">
    <property type="entry name" value="A-D-PHexomutase_a/b/a-I/II/III"/>
</dbReference>
<dbReference type="InterPro" id="IPR005845">
    <property type="entry name" value="A-D-PHexomutase_a/b/a-II"/>
</dbReference>
<dbReference type="InterPro" id="IPR005846">
    <property type="entry name" value="A-D-PHexomutase_a/b/a-III"/>
</dbReference>
<dbReference type="InterPro" id="IPR005843">
    <property type="entry name" value="A-D-PHexomutase_C"/>
</dbReference>
<dbReference type="InterPro" id="IPR036900">
    <property type="entry name" value="A-D-PHexomutase_C_sf"/>
</dbReference>
<dbReference type="InterPro" id="IPR016066">
    <property type="entry name" value="A-D-PHexomutase_CS"/>
</dbReference>
<dbReference type="InterPro" id="IPR005841">
    <property type="entry name" value="Alpha-D-phosphohexomutase_SF"/>
</dbReference>
<dbReference type="InterPro" id="IPR006352">
    <property type="entry name" value="GlmM_bact"/>
</dbReference>
<dbReference type="InterPro" id="IPR050060">
    <property type="entry name" value="Phosphoglucosamine_mutase"/>
</dbReference>
<dbReference type="NCBIfam" id="TIGR01455">
    <property type="entry name" value="glmM"/>
    <property type="match status" value="1"/>
</dbReference>
<dbReference type="NCBIfam" id="NF008139">
    <property type="entry name" value="PRK10887.1"/>
    <property type="match status" value="1"/>
</dbReference>
<dbReference type="PANTHER" id="PTHR42946:SF1">
    <property type="entry name" value="PHOSPHOGLUCOMUTASE (ALPHA-D-GLUCOSE-1,6-BISPHOSPHATE-DEPENDENT)"/>
    <property type="match status" value="1"/>
</dbReference>
<dbReference type="PANTHER" id="PTHR42946">
    <property type="entry name" value="PHOSPHOHEXOSE MUTASE"/>
    <property type="match status" value="1"/>
</dbReference>
<dbReference type="Pfam" id="PF02878">
    <property type="entry name" value="PGM_PMM_I"/>
    <property type="match status" value="1"/>
</dbReference>
<dbReference type="Pfam" id="PF02879">
    <property type="entry name" value="PGM_PMM_II"/>
    <property type="match status" value="1"/>
</dbReference>
<dbReference type="Pfam" id="PF02880">
    <property type="entry name" value="PGM_PMM_III"/>
    <property type="match status" value="1"/>
</dbReference>
<dbReference type="Pfam" id="PF00408">
    <property type="entry name" value="PGM_PMM_IV"/>
    <property type="match status" value="1"/>
</dbReference>
<dbReference type="PRINTS" id="PR00509">
    <property type="entry name" value="PGMPMM"/>
</dbReference>
<dbReference type="SUPFAM" id="SSF55957">
    <property type="entry name" value="Phosphoglucomutase, C-terminal domain"/>
    <property type="match status" value="1"/>
</dbReference>
<dbReference type="SUPFAM" id="SSF53738">
    <property type="entry name" value="Phosphoglucomutase, first 3 domains"/>
    <property type="match status" value="3"/>
</dbReference>
<dbReference type="PROSITE" id="PS00710">
    <property type="entry name" value="PGM_PMM"/>
    <property type="match status" value="1"/>
</dbReference>
<feature type="chain" id="PRO_0000343592" description="Phosphoglucosamine mutase">
    <location>
        <begin position="1"/>
        <end position="446"/>
    </location>
</feature>
<feature type="active site" description="Phosphoserine intermediate" evidence="1">
    <location>
        <position position="100"/>
    </location>
</feature>
<feature type="binding site" description="via phosphate group" evidence="1">
    <location>
        <position position="100"/>
    </location>
    <ligand>
        <name>Mg(2+)</name>
        <dbReference type="ChEBI" id="CHEBI:18420"/>
    </ligand>
</feature>
<feature type="binding site" evidence="1">
    <location>
        <position position="241"/>
    </location>
    <ligand>
        <name>Mg(2+)</name>
        <dbReference type="ChEBI" id="CHEBI:18420"/>
    </ligand>
</feature>
<feature type="binding site" evidence="1">
    <location>
        <position position="243"/>
    </location>
    <ligand>
        <name>Mg(2+)</name>
        <dbReference type="ChEBI" id="CHEBI:18420"/>
    </ligand>
</feature>
<feature type="binding site" evidence="1">
    <location>
        <position position="245"/>
    </location>
    <ligand>
        <name>Mg(2+)</name>
        <dbReference type="ChEBI" id="CHEBI:18420"/>
    </ligand>
</feature>
<feature type="modified residue" description="Phosphoserine" evidence="1">
    <location>
        <position position="100"/>
    </location>
</feature>
<gene>
    <name evidence="1" type="primary">glmM</name>
    <name type="ordered locus">Mpop_5384</name>
</gene>
<reference key="1">
    <citation type="submission" date="2008-04" db="EMBL/GenBank/DDBJ databases">
        <title>Complete sequence of chromosome of Methylobacterium populi BJ001.</title>
        <authorList>
            <consortium name="US DOE Joint Genome Institute"/>
            <person name="Copeland A."/>
            <person name="Lucas S."/>
            <person name="Lapidus A."/>
            <person name="Glavina del Rio T."/>
            <person name="Dalin E."/>
            <person name="Tice H."/>
            <person name="Bruce D."/>
            <person name="Goodwin L."/>
            <person name="Pitluck S."/>
            <person name="Chertkov O."/>
            <person name="Brettin T."/>
            <person name="Detter J.C."/>
            <person name="Han C."/>
            <person name="Kuske C.R."/>
            <person name="Schmutz J."/>
            <person name="Larimer F."/>
            <person name="Land M."/>
            <person name="Hauser L."/>
            <person name="Kyrpides N."/>
            <person name="Mikhailova N."/>
            <person name="Marx C."/>
            <person name="Richardson P."/>
        </authorList>
    </citation>
    <scope>NUCLEOTIDE SEQUENCE [LARGE SCALE GENOMIC DNA]</scope>
    <source>
        <strain>ATCC BAA-705 / NCIMB 13946 / BJ001</strain>
    </source>
</reference>